<keyword id="KW-0963">Cytoplasm</keyword>
<keyword id="KW-0238">DNA-binding</keyword>
<keyword id="KW-1185">Reference proteome</keyword>
<evidence type="ECO:0000255" key="1">
    <source>
        <dbReference type="HAMAP-Rule" id="MF_00274"/>
    </source>
</evidence>
<comment type="function">
    <text evidence="1">Binds to DNA and alters its conformation. May be involved in regulation of gene expression, nucleoid organization and DNA protection.</text>
</comment>
<comment type="subunit">
    <text evidence="1">Homodimer.</text>
</comment>
<comment type="subcellular location">
    <subcellularLocation>
        <location evidence="1">Cytoplasm</location>
        <location evidence="1">Nucleoid</location>
    </subcellularLocation>
</comment>
<comment type="similarity">
    <text evidence="1">Belongs to the YbaB/EbfC family.</text>
</comment>
<accession>B2U4S4</accession>
<gene>
    <name evidence="1" type="primary">ybaB</name>
    <name type="ordered locus">SbBS512_E0403</name>
</gene>
<proteinExistence type="inferred from homology"/>
<dbReference type="EMBL" id="CP001063">
    <property type="protein sequence ID" value="ACD10376.1"/>
    <property type="molecule type" value="Genomic_DNA"/>
</dbReference>
<dbReference type="RefSeq" id="WP_000467098.1">
    <property type="nucleotide sequence ID" value="NC_010658.1"/>
</dbReference>
<dbReference type="SMR" id="B2U4S4"/>
<dbReference type="STRING" id="344609.SbBS512_E0403"/>
<dbReference type="KEGG" id="sbc:SbBS512_E0403"/>
<dbReference type="HOGENOM" id="CLU_140930_0_0_6"/>
<dbReference type="Proteomes" id="UP000001030">
    <property type="component" value="Chromosome"/>
</dbReference>
<dbReference type="GO" id="GO:0043590">
    <property type="term" value="C:bacterial nucleoid"/>
    <property type="evidence" value="ECO:0007669"/>
    <property type="project" value="UniProtKB-UniRule"/>
</dbReference>
<dbReference type="GO" id="GO:0005829">
    <property type="term" value="C:cytosol"/>
    <property type="evidence" value="ECO:0007669"/>
    <property type="project" value="TreeGrafter"/>
</dbReference>
<dbReference type="GO" id="GO:0003677">
    <property type="term" value="F:DNA binding"/>
    <property type="evidence" value="ECO:0007669"/>
    <property type="project" value="UniProtKB-UniRule"/>
</dbReference>
<dbReference type="FunFam" id="3.30.1310.10:FF:000001">
    <property type="entry name" value="Nucleoid-associated protein YbaB"/>
    <property type="match status" value="1"/>
</dbReference>
<dbReference type="Gene3D" id="3.30.1310.10">
    <property type="entry name" value="Nucleoid-associated protein YbaB-like domain"/>
    <property type="match status" value="1"/>
</dbReference>
<dbReference type="HAMAP" id="MF_00274">
    <property type="entry name" value="DNA_YbaB_EbfC"/>
    <property type="match status" value="1"/>
</dbReference>
<dbReference type="InterPro" id="IPR036894">
    <property type="entry name" value="YbaB-like_sf"/>
</dbReference>
<dbReference type="InterPro" id="IPR004401">
    <property type="entry name" value="YbaB/EbfC"/>
</dbReference>
<dbReference type="NCBIfam" id="TIGR00103">
    <property type="entry name" value="DNA_YbaB_EbfC"/>
    <property type="match status" value="1"/>
</dbReference>
<dbReference type="PANTHER" id="PTHR33449">
    <property type="entry name" value="NUCLEOID-ASSOCIATED PROTEIN YBAB"/>
    <property type="match status" value="1"/>
</dbReference>
<dbReference type="PANTHER" id="PTHR33449:SF1">
    <property type="entry name" value="NUCLEOID-ASSOCIATED PROTEIN YBAB"/>
    <property type="match status" value="1"/>
</dbReference>
<dbReference type="Pfam" id="PF02575">
    <property type="entry name" value="YbaB_DNA_bd"/>
    <property type="match status" value="1"/>
</dbReference>
<dbReference type="PIRSF" id="PIRSF004555">
    <property type="entry name" value="UCP004555"/>
    <property type="match status" value="1"/>
</dbReference>
<dbReference type="SUPFAM" id="SSF82607">
    <property type="entry name" value="YbaB-like"/>
    <property type="match status" value="1"/>
</dbReference>
<sequence>MFGKGGLGNLMKQAQQMQEKMQKMQEEIAQLEVTGESGAGLVKVTINGAHNCRRVEIDPSLLEDDKEMLEDLVAAAFNDAARRIEETQKEKMASVSSGMQLPPGFKMPF</sequence>
<name>YBAB_SHIB3</name>
<reference key="1">
    <citation type="submission" date="2008-05" db="EMBL/GenBank/DDBJ databases">
        <title>Complete sequence of Shigella boydii serotype 18 strain BS512.</title>
        <authorList>
            <person name="Rasko D.A."/>
            <person name="Rosovitz M."/>
            <person name="Maurelli A.T."/>
            <person name="Myers G."/>
            <person name="Seshadri R."/>
            <person name="Cer R."/>
            <person name="Jiang L."/>
            <person name="Ravel J."/>
            <person name="Sebastian Y."/>
        </authorList>
    </citation>
    <scope>NUCLEOTIDE SEQUENCE [LARGE SCALE GENOMIC DNA]</scope>
    <source>
        <strain>CDC 3083-94 / BS512</strain>
    </source>
</reference>
<protein>
    <recommendedName>
        <fullName evidence="1">Nucleoid-associated protein YbaB</fullName>
    </recommendedName>
</protein>
<feature type="chain" id="PRO_1000114649" description="Nucleoid-associated protein YbaB">
    <location>
        <begin position="1"/>
        <end position="109"/>
    </location>
</feature>
<organism>
    <name type="scientific">Shigella boydii serotype 18 (strain CDC 3083-94 / BS512)</name>
    <dbReference type="NCBI Taxonomy" id="344609"/>
    <lineage>
        <taxon>Bacteria</taxon>
        <taxon>Pseudomonadati</taxon>
        <taxon>Pseudomonadota</taxon>
        <taxon>Gammaproteobacteria</taxon>
        <taxon>Enterobacterales</taxon>
        <taxon>Enterobacteriaceae</taxon>
        <taxon>Shigella</taxon>
    </lineage>
</organism>